<organism>
    <name type="scientific">Shigella flexneri</name>
    <dbReference type="NCBI Taxonomy" id="623"/>
    <lineage>
        <taxon>Bacteria</taxon>
        <taxon>Pseudomonadati</taxon>
        <taxon>Pseudomonadota</taxon>
        <taxon>Gammaproteobacteria</taxon>
        <taxon>Enterobacterales</taxon>
        <taxon>Enterobacteriaceae</taxon>
        <taxon>Shigella</taxon>
    </lineage>
</organism>
<protein>
    <recommendedName>
        <fullName evidence="4">Oligopeptide transport system permease protein OppB</fullName>
    </recommendedName>
</protein>
<reference key="1">
    <citation type="journal article" date="2002" name="Nucleic Acids Res.">
        <title>Genome sequence of Shigella flexneri 2a: insights into pathogenicity through comparison with genomes of Escherichia coli K12 and O157.</title>
        <authorList>
            <person name="Jin Q."/>
            <person name="Yuan Z."/>
            <person name="Xu J."/>
            <person name="Wang Y."/>
            <person name="Shen Y."/>
            <person name="Lu W."/>
            <person name="Wang J."/>
            <person name="Liu H."/>
            <person name="Yang J."/>
            <person name="Yang F."/>
            <person name="Zhang X."/>
            <person name="Zhang J."/>
            <person name="Yang G."/>
            <person name="Wu H."/>
            <person name="Qu D."/>
            <person name="Dong J."/>
            <person name="Sun L."/>
            <person name="Xue Y."/>
            <person name="Zhao A."/>
            <person name="Gao Y."/>
            <person name="Zhu J."/>
            <person name="Kan B."/>
            <person name="Ding K."/>
            <person name="Chen S."/>
            <person name="Cheng H."/>
            <person name="Yao Z."/>
            <person name="He B."/>
            <person name="Chen R."/>
            <person name="Ma D."/>
            <person name="Qiang B."/>
            <person name="Wen Y."/>
            <person name="Hou Y."/>
            <person name="Yu J."/>
        </authorList>
    </citation>
    <scope>NUCLEOTIDE SEQUENCE [LARGE SCALE GENOMIC DNA]</scope>
    <source>
        <strain>301 / Serotype 2a</strain>
    </source>
</reference>
<reference key="2">
    <citation type="journal article" date="2003" name="Infect. Immun.">
        <title>Complete genome sequence and comparative genomics of Shigella flexneri serotype 2a strain 2457T.</title>
        <authorList>
            <person name="Wei J."/>
            <person name="Goldberg M.B."/>
            <person name="Burland V."/>
            <person name="Venkatesan M.M."/>
            <person name="Deng W."/>
            <person name="Fournier G."/>
            <person name="Mayhew G.F."/>
            <person name="Plunkett G. III"/>
            <person name="Rose D.J."/>
            <person name="Darling A."/>
            <person name="Mau B."/>
            <person name="Perna N.T."/>
            <person name="Payne S.M."/>
            <person name="Runyen-Janecky L.J."/>
            <person name="Zhou S."/>
            <person name="Schwartz D.C."/>
            <person name="Blattner F.R."/>
        </authorList>
    </citation>
    <scope>NUCLEOTIDE SEQUENCE [LARGE SCALE GENOMIC DNA]</scope>
    <source>
        <strain>ATCC 700930 / 2457T / Serotype 2a</strain>
    </source>
</reference>
<sequence>MLKFILRRCLEAIPTLFILITISFFMMRLAPGSPFTGERTLPPEVMANIEAKYHLNDPIMTQYFSYLKQLAHGDFGPSFKYKDYSVNDLVASSFPVSAKLGAAAFFLAVILGVSAGVIAALKQNTKWDYTVMGLAMTGVVIPSFVVAPLLVMIFAIILHWLPGGGWNGGALKFMILPMVALSLAYIASIARITRGSMIEVLHSNFIRTARAKGLPMRRIILRHALKPALLPVLSYMGPAFVGIITGSMVIETIYGLPGIGQLFVNGALNRDYSLVLSLTILVGALTILFNAIVDVLYAVIDPKIRY</sequence>
<keyword id="KW-0997">Cell inner membrane</keyword>
<keyword id="KW-1003">Cell membrane</keyword>
<keyword id="KW-0472">Membrane</keyword>
<keyword id="KW-0571">Peptide transport</keyword>
<keyword id="KW-0653">Protein transport</keyword>
<keyword id="KW-1185">Reference proteome</keyword>
<keyword id="KW-0812">Transmembrane</keyword>
<keyword id="KW-1133">Transmembrane helix</keyword>
<keyword id="KW-0813">Transport</keyword>
<comment type="function">
    <text evidence="1">Part of the ABC transporter complex OppABCDF involved in the uptake of oligopeptides (By similarity). Probably responsible for the translocation of the substrate across the membrane (By similarity).</text>
</comment>
<comment type="subunit">
    <text evidence="1">The complex is composed of two ATP-binding proteins (OppD and OppF), two transmembrane proteins (OppB and OppC) and a solute-binding protein (OppA).</text>
</comment>
<comment type="subcellular location">
    <subcellularLocation>
        <location evidence="1">Cell inner membrane</location>
        <topology evidence="2">Multi-pass membrane protein</topology>
    </subcellularLocation>
</comment>
<comment type="similarity">
    <text evidence="4">Belongs to the binding-protein-dependent transport system permease family. OppBC subfamily.</text>
</comment>
<dbReference type="EMBL" id="AE005674">
    <property type="protein sequence ID" value="AAN42858.1"/>
    <property type="molecule type" value="Genomic_DNA"/>
</dbReference>
<dbReference type="EMBL" id="AE014073">
    <property type="protein sequence ID" value="AAP16743.1"/>
    <property type="molecule type" value="Genomic_DNA"/>
</dbReference>
<dbReference type="RefSeq" id="NP_707151.1">
    <property type="nucleotide sequence ID" value="NC_004337.2"/>
</dbReference>
<dbReference type="RefSeq" id="WP_000911112.1">
    <property type="nucleotide sequence ID" value="NZ_WPGW01000123.1"/>
</dbReference>
<dbReference type="SMR" id="P0AFH5"/>
<dbReference type="STRING" id="198214.SF1245"/>
<dbReference type="PaxDb" id="198214-SF1245"/>
<dbReference type="GeneID" id="1024214"/>
<dbReference type="GeneID" id="75203356"/>
<dbReference type="KEGG" id="sfl:SF1245"/>
<dbReference type="KEGG" id="sfx:S1331"/>
<dbReference type="PATRIC" id="fig|198214.7.peg.1465"/>
<dbReference type="HOGENOM" id="CLU_036879_0_0_6"/>
<dbReference type="Proteomes" id="UP000001006">
    <property type="component" value="Chromosome"/>
</dbReference>
<dbReference type="Proteomes" id="UP000002673">
    <property type="component" value="Chromosome"/>
</dbReference>
<dbReference type="GO" id="GO:0005886">
    <property type="term" value="C:plasma membrane"/>
    <property type="evidence" value="ECO:0007669"/>
    <property type="project" value="UniProtKB-SubCell"/>
</dbReference>
<dbReference type="GO" id="GO:0015833">
    <property type="term" value="P:peptide transport"/>
    <property type="evidence" value="ECO:0007669"/>
    <property type="project" value="UniProtKB-KW"/>
</dbReference>
<dbReference type="GO" id="GO:0015031">
    <property type="term" value="P:protein transport"/>
    <property type="evidence" value="ECO:0007669"/>
    <property type="project" value="UniProtKB-KW"/>
</dbReference>
<dbReference type="GO" id="GO:0055085">
    <property type="term" value="P:transmembrane transport"/>
    <property type="evidence" value="ECO:0007669"/>
    <property type="project" value="InterPro"/>
</dbReference>
<dbReference type="CDD" id="cd06261">
    <property type="entry name" value="TM_PBP2"/>
    <property type="match status" value="1"/>
</dbReference>
<dbReference type="FunFam" id="1.10.3720.10:FF:000016">
    <property type="entry name" value="Oligopeptide transport system permease OppB"/>
    <property type="match status" value="1"/>
</dbReference>
<dbReference type="Gene3D" id="1.10.3720.10">
    <property type="entry name" value="MetI-like"/>
    <property type="match status" value="1"/>
</dbReference>
<dbReference type="InterPro" id="IPR045621">
    <property type="entry name" value="BPD_transp_1_N"/>
</dbReference>
<dbReference type="InterPro" id="IPR000515">
    <property type="entry name" value="MetI-like"/>
</dbReference>
<dbReference type="InterPro" id="IPR035906">
    <property type="entry name" value="MetI-like_sf"/>
</dbReference>
<dbReference type="NCBIfam" id="NF007008">
    <property type="entry name" value="PRK09471.1"/>
    <property type="match status" value="1"/>
</dbReference>
<dbReference type="PANTHER" id="PTHR43163">
    <property type="entry name" value="DIPEPTIDE TRANSPORT SYSTEM PERMEASE PROTEIN DPPB-RELATED"/>
    <property type="match status" value="1"/>
</dbReference>
<dbReference type="PANTHER" id="PTHR43163:SF6">
    <property type="entry name" value="DIPEPTIDE TRANSPORT SYSTEM PERMEASE PROTEIN DPPB-RELATED"/>
    <property type="match status" value="1"/>
</dbReference>
<dbReference type="Pfam" id="PF00528">
    <property type="entry name" value="BPD_transp_1"/>
    <property type="match status" value="1"/>
</dbReference>
<dbReference type="Pfam" id="PF19300">
    <property type="entry name" value="BPD_transp_1_N"/>
    <property type="match status" value="1"/>
</dbReference>
<dbReference type="SUPFAM" id="SSF161098">
    <property type="entry name" value="MetI-like"/>
    <property type="match status" value="1"/>
</dbReference>
<dbReference type="PROSITE" id="PS50928">
    <property type="entry name" value="ABC_TM1"/>
    <property type="match status" value="1"/>
</dbReference>
<evidence type="ECO:0000250" key="1">
    <source>
        <dbReference type="UniProtKB" id="P0AFH2"/>
    </source>
</evidence>
<evidence type="ECO:0000255" key="2"/>
<evidence type="ECO:0000255" key="3">
    <source>
        <dbReference type="PROSITE-ProRule" id="PRU00441"/>
    </source>
</evidence>
<evidence type="ECO:0000305" key="4"/>
<proteinExistence type="inferred from homology"/>
<feature type="chain" id="PRO_0000060147" description="Oligopeptide transport system permease protein OppB">
    <location>
        <begin position="1"/>
        <end position="306"/>
    </location>
</feature>
<feature type="topological domain" description="Cytoplasmic" evidence="4">
    <location>
        <begin position="1"/>
        <end position="11"/>
    </location>
</feature>
<feature type="transmembrane region" description="Helical" evidence="2">
    <location>
        <begin position="12"/>
        <end position="32"/>
    </location>
</feature>
<feature type="topological domain" description="Periplasmic" evidence="4">
    <location>
        <begin position="33"/>
        <end position="99"/>
    </location>
</feature>
<feature type="transmembrane region" description="Helical" evidence="2">
    <location>
        <begin position="100"/>
        <end position="120"/>
    </location>
</feature>
<feature type="topological domain" description="Cytoplasmic" evidence="4">
    <location>
        <begin position="121"/>
        <end position="137"/>
    </location>
</feature>
<feature type="transmembrane region" description="Helical" evidence="2">
    <location>
        <begin position="138"/>
        <end position="158"/>
    </location>
</feature>
<feature type="topological domain" description="Periplasmic" evidence="4">
    <location>
        <begin position="159"/>
        <end position="169"/>
    </location>
</feature>
<feature type="transmembrane region" description="Helical" evidence="2">
    <location>
        <begin position="170"/>
        <end position="190"/>
    </location>
</feature>
<feature type="topological domain" description="Cytoplasmic" evidence="4">
    <location>
        <begin position="191"/>
        <end position="229"/>
    </location>
</feature>
<feature type="transmembrane region" description="Helical" evidence="2">
    <location>
        <begin position="230"/>
        <end position="250"/>
    </location>
</feature>
<feature type="topological domain" description="Periplasmic" evidence="4">
    <location>
        <begin position="251"/>
        <end position="279"/>
    </location>
</feature>
<feature type="transmembrane region" description="Helical" evidence="2">
    <location>
        <begin position="280"/>
        <end position="300"/>
    </location>
</feature>
<feature type="topological domain" description="Cytoplasmic" evidence="1">
    <location>
        <begin position="301"/>
        <end position="306"/>
    </location>
</feature>
<feature type="domain" description="ABC transmembrane type-1" evidence="3">
    <location>
        <begin position="94"/>
        <end position="293"/>
    </location>
</feature>
<gene>
    <name type="primary">oppB</name>
    <name type="ordered locus">SF1245</name>
    <name type="ordered locus">S1331</name>
</gene>
<name>OPPB_SHIFL</name>
<accession>P0AFH5</accession>
<accession>P31132</accession>
<accession>P76026</accession>
<accession>P77550</accession>